<organism>
    <name type="scientific">Acanthamoeba polyphaga mimivirus</name>
    <name type="common">APMV</name>
    <dbReference type="NCBI Taxonomy" id="212035"/>
    <lineage>
        <taxon>Viruses</taxon>
        <taxon>Varidnaviria</taxon>
        <taxon>Bamfordvirae</taxon>
        <taxon>Nucleocytoviricota</taxon>
        <taxon>Megaviricetes</taxon>
        <taxon>Imitervirales</taxon>
        <taxon>Mimiviridae</taxon>
        <taxon>Megamimivirinae</taxon>
        <taxon>Mimivirus</taxon>
        <taxon>Mimivirus bradfordmassiliense</taxon>
    </lineage>
</organism>
<dbReference type="EMBL" id="AY653733">
    <property type="protein sequence ID" value="AAV50942.1"/>
    <property type="molecule type" value="Genomic_DNA"/>
</dbReference>
<dbReference type="SMR" id="Q5UNT5"/>
<dbReference type="KEGG" id="vg:9925329"/>
<dbReference type="Proteomes" id="UP000001134">
    <property type="component" value="Genome"/>
</dbReference>
<protein>
    <recommendedName>
        <fullName>Uncharacterized protein R681</fullName>
    </recommendedName>
</protein>
<accession>Q5UNT5</accession>
<organismHost>
    <name type="scientific">Acanthamoeba polyphaga</name>
    <name type="common">Amoeba</name>
    <dbReference type="NCBI Taxonomy" id="5757"/>
</organismHost>
<proteinExistence type="predicted"/>
<keyword id="KW-1185">Reference proteome</keyword>
<sequence>MYTLPLDSNELQELTTESINQTIIKKYFNESAIYLSYIGNYDTNCILTFGKTRDLTKFKIAVYKKRYKYFNIIALWNVIDDTLTESNISKIITDTNPQYNPYQFVFLPNLKPTKNIIVINRIRNLNYHIDLITDIIQKTKLFHENAPNLYH</sequence>
<feature type="chain" id="PRO_0000071313" description="Uncharacterized protein R681">
    <location>
        <begin position="1"/>
        <end position="151"/>
    </location>
</feature>
<gene>
    <name type="ordered locus">MIMI_R681</name>
</gene>
<name>YR681_MIMIV</name>
<reference key="1">
    <citation type="journal article" date="2004" name="Science">
        <title>The 1.2-megabase genome sequence of Mimivirus.</title>
        <authorList>
            <person name="Raoult D."/>
            <person name="Audic S."/>
            <person name="Robert C."/>
            <person name="Abergel C."/>
            <person name="Renesto P."/>
            <person name="Ogata H."/>
            <person name="La Scola B."/>
            <person name="Susan M."/>
            <person name="Claverie J.-M."/>
        </authorList>
    </citation>
    <scope>NUCLEOTIDE SEQUENCE [LARGE SCALE GENOMIC DNA]</scope>
    <source>
        <strain>Rowbotham-Bradford</strain>
    </source>
</reference>